<evidence type="ECO:0000255" key="1">
    <source>
        <dbReference type="PROSITE-ProRule" id="PRU01161"/>
    </source>
</evidence>
<evidence type="ECO:0000269" key="2">
    <source>
    </source>
</evidence>
<evidence type="ECO:0000303" key="3">
    <source>
    </source>
</evidence>
<evidence type="ECO:0000303" key="4">
    <source>
    </source>
</evidence>
<evidence type="ECO:0000305" key="5"/>
<evidence type="ECO:0000305" key="6">
    <source>
    </source>
</evidence>
<evidence type="ECO:0000305" key="7">
    <source>
    </source>
</evidence>
<name>CAPE_ECOLX</name>
<organism>
    <name type="scientific">Escherichia coli</name>
    <dbReference type="NCBI Taxonomy" id="562"/>
    <lineage>
        <taxon>Bacteria</taxon>
        <taxon>Pseudomonadati</taxon>
        <taxon>Pseudomonadota</taxon>
        <taxon>Gammaproteobacteria</taxon>
        <taxon>Enterobacterales</taxon>
        <taxon>Enterobacteriaceae</taxon>
        <taxon>Escherichia</taxon>
    </lineage>
</organism>
<reference key="1">
    <citation type="journal article" date="2004" name="Mol. Microbiol.">
        <title>A novel integrative and conjugative element (ICE) of Escherichia coli: the putative progenitor of the Yersinia high-pathogenicity island.</title>
        <authorList>
            <person name="Schubert S."/>
            <person name="Dufke S."/>
            <person name="Sorsa J."/>
            <person name="Heesemann J."/>
        </authorList>
    </citation>
    <scope>NUCLEOTIDE SEQUENCE [GENOMIC DNA]</scope>
    <source>
        <strain>ATCC 35350 / ECOR 31</strain>
    </source>
</reference>
<reference key="2">
    <citation type="journal article" date="2019" name="Nature">
        <title>Bacterial cGAS-like enzymes synthesize diverse nucleotide signals.</title>
        <authorList>
            <person name="Whiteley A.T."/>
            <person name="Eaglesham J.B."/>
            <person name="de Oliveira Mann C.C."/>
            <person name="Morehouse B.R."/>
            <person name="Lowey B."/>
            <person name="Nieminen E.A."/>
            <person name="Danilchanka O."/>
            <person name="King D.S."/>
            <person name="Lee A.S.Y."/>
            <person name="Mekalanos J.J."/>
            <person name="Kranzusch P.J."/>
        </authorList>
    </citation>
    <scope>FUNCTION</scope>
    <scope>CATALYTIC ACTIVITY</scope>
    <scope>ACTIVITY REGULATION</scope>
    <scope>NOMENCLATURE</scope>
    <scope>SIMILARITY</scope>
    <source>
        <strain>ATCC 35350 / ECOR 31</strain>
    </source>
</reference>
<reference key="3">
    <citation type="journal article" date="2020" name="Nat. Microbiol.">
        <title>Diversity and classification of cyclic-oligonucleotide-based anti-phage signalling systems.</title>
        <authorList>
            <person name="Millman A."/>
            <person name="Melamed S."/>
            <person name="Amitai G."/>
            <person name="Sorek R."/>
        </authorList>
    </citation>
    <scope>CLASSIFICATION AND NOMENCLATURE</scope>
</reference>
<comment type="function">
    <text evidence="2 4 5">Effector phospholipase of a CBASS antivirus system (PubMed:30787435). CBASS (cyclic oligonucleotide-based antiphage signaling system) provides immunity against bacteriophage. The CD-NTase protein synthesizes cyclic nucleotides in response to infection; these serve as specific second messenger signals. The signals activate a diverse range of effectors, leading to bacterial cell death and thus abortive phage infection. A type II-A(UA) CBASS system (PubMed:32839535).</text>
</comment>
<comment type="function">
    <text evidence="2">Phospholipase that is activated upon binding to the cyclic dinucleotide (CDN) second messenger 3',3'-cyclic UMP-AMP (3',3'-cUAMP).</text>
</comment>
<comment type="catalytic activity">
    <reaction evidence="2">
        <text>a 1,2-diacyl-sn-glycero-3-phosphocholine + H2O = a 2-acyl-sn-glycero-3-phosphocholine + a fatty acid + H(+)</text>
        <dbReference type="Rhea" id="RHEA:18689"/>
        <dbReference type="ChEBI" id="CHEBI:15377"/>
        <dbReference type="ChEBI" id="CHEBI:15378"/>
        <dbReference type="ChEBI" id="CHEBI:28868"/>
        <dbReference type="ChEBI" id="CHEBI:57643"/>
        <dbReference type="ChEBI" id="CHEBI:57875"/>
        <dbReference type="EC" id="3.1.1.32"/>
    </reaction>
    <physiologicalReaction direction="left-to-right" evidence="7">
        <dbReference type="Rhea" id="RHEA:18690"/>
    </physiologicalReaction>
</comment>
<comment type="activity regulation">
    <text evidence="2">Phospholipase activity is specifically activated upon 3',3'-cUAMP binding. Is not activated by the other cyclic dinucleotides 3',3'-cGAMP, 3',3'-c-diAMP and 3',3'-c-diGMP. Therefore, is specifically activated by only the nucleotide synthesized from its adjacently encoded nucleotidyltransferase (CdnE).</text>
</comment>
<comment type="miscellaneous">
    <text evidence="6">This is a complex CBASS locus with the loci capE-cdnE-probable diadenylate cyclase-capV-dcnV1-cap2-cap3.</text>
</comment>
<comment type="similarity">
    <text evidence="5">Belongs to the patatin family.</text>
</comment>
<comment type="sequence caution" evidence="5">
    <conflict type="frameshift">
        <sequence resource="EMBL-CDS" id="AAP70300"/>
    </conflict>
</comment>
<sequence>MTYSVSPSSLLTEYGNDNICRVLALDGGGAKGFYTLGVLKEIEAMLGCPLYKRFDLVFGTSTGAIIAALIALGYEVDQIHALYTEHVPRVMSSRSAAARTMALQDLAKEVFQDKTFEDVLMGIGIVATRWMTERPMIFKGNVVQAHGRKGTFSPGFGVSIADAVQASCSAYPFFERKVIVTAAGDKVELIDGGYCANNPTLFAIADATVALKKDHKDIRVINVGVGIYPEPKPGLLMRIAKKWLAVQLLQKTLEINTQSMDQLRDILFKDIPTIRISDTFERPEMATDLLEYNLDKLNTLRQRGRESFGAREAQLREFLI</sequence>
<gene>
    <name evidence="3" type="primary">capE</name>
</gene>
<dbReference type="EC" id="3.1.1.32" evidence="2"/>
<dbReference type="EMBL" id="AY233333">
    <property type="protein sequence ID" value="AAP70300.1"/>
    <property type="status" value="ALT_FRAME"/>
    <property type="molecule type" value="Genomic_DNA"/>
</dbReference>
<dbReference type="RefSeq" id="WP_001593459.1">
    <property type="nucleotide sequence ID" value="NZ_VTMJ01000059.1"/>
</dbReference>
<dbReference type="SMR" id="Q6XGD4"/>
<dbReference type="GO" id="GO:0016020">
    <property type="term" value="C:membrane"/>
    <property type="evidence" value="ECO:0007669"/>
    <property type="project" value="TreeGrafter"/>
</dbReference>
<dbReference type="GO" id="GO:0008970">
    <property type="term" value="F:phospholipase A1 activity"/>
    <property type="evidence" value="ECO:0007669"/>
    <property type="project" value="UniProtKB-EC"/>
</dbReference>
<dbReference type="GO" id="GO:0051607">
    <property type="term" value="P:defense response to virus"/>
    <property type="evidence" value="ECO:0007669"/>
    <property type="project" value="UniProtKB-KW"/>
</dbReference>
<dbReference type="GO" id="GO:0006631">
    <property type="term" value="P:fatty acid metabolic process"/>
    <property type="evidence" value="ECO:0007669"/>
    <property type="project" value="TreeGrafter"/>
</dbReference>
<dbReference type="GO" id="GO:0016042">
    <property type="term" value="P:lipid catabolic process"/>
    <property type="evidence" value="ECO:0007669"/>
    <property type="project" value="UniProtKB-KW"/>
</dbReference>
<dbReference type="CDD" id="cd07199">
    <property type="entry name" value="Pat17_PNPLA8_PNPLA9_like"/>
    <property type="match status" value="1"/>
</dbReference>
<dbReference type="Gene3D" id="3.40.1090.10">
    <property type="entry name" value="Cytosolic phospholipase A2 catalytic domain"/>
    <property type="match status" value="1"/>
</dbReference>
<dbReference type="InterPro" id="IPR016035">
    <property type="entry name" value="Acyl_Trfase/lysoPLipase"/>
</dbReference>
<dbReference type="InterPro" id="IPR002641">
    <property type="entry name" value="PNPLA_dom"/>
</dbReference>
<dbReference type="PANTHER" id="PTHR24185">
    <property type="entry name" value="CALCIUM-INDEPENDENT PHOSPHOLIPASE A2-GAMMA"/>
    <property type="match status" value="1"/>
</dbReference>
<dbReference type="PANTHER" id="PTHR24185:SF1">
    <property type="entry name" value="CALCIUM-INDEPENDENT PHOSPHOLIPASE A2-GAMMA"/>
    <property type="match status" value="1"/>
</dbReference>
<dbReference type="Pfam" id="PF01734">
    <property type="entry name" value="Patatin"/>
    <property type="match status" value="1"/>
</dbReference>
<dbReference type="SUPFAM" id="SSF52151">
    <property type="entry name" value="FabD/lysophospholipase-like"/>
    <property type="match status" value="1"/>
</dbReference>
<dbReference type="PROSITE" id="PS51635">
    <property type="entry name" value="PNPLA"/>
    <property type="match status" value="1"/>
</dbReference>
<keyword id="KW-0051">Antiviral defense</keyword>
<keyword id="KW-0378">Hydrolase</keyword>
<keyword id="KW-0442">Lipid degradation</keyword>
<keyword id="KW-0443">Lipid metabolism</keyword>
<feature type="chain" id="PRO_0000447707" description="cUMP-AMP-activated phospholipase">
    <location>
        <begin position="1"/>
        <end position="320"/>
    </location>
</feature>
<feature type="domain" description="PNPLA" evidence="1">
    <location>
        <begin position="23"/>
        <end position="204"/>
    </location>
</feature>
<feature type="short sequence motif" description="GXGXXG" evidence="1">
    <location>
        <begin position="27"/>
        <end position="32"/>
    </location>
</feature>
<feature type="short sequence motif" description="GXSXG" evidence="1">
    <location>
        <begin position="59"/>
        <end position="63"/>
    </location>
</feature>
<feature type="short sequence motif" description="DGA/G" evidence="1">
    <location>
        <begin position="191"/>
        <end position="193"/>
    </location>
</feature>
<feature type="active site" description="Nucleophile" evidence="1">
    <location>
        <position position="61"/>
    </location>
</feature>
<feature type="active site" description="Proton acceptor" evidence="1">
    <location>
        <position position="191"/>
    </location>
</feature>
<accession>Q6XGD4</accession>
<proteinExistence type="evidence at protein level"/>
<protein>
    <recommendedName>
        <fullName evidence="3">cUMP-AMP-activated phospholipase</fullName>
        <ecNumber evidence="2">3.1.1.32</ecNumber>
    </recommendedName>
    <alternativeName>
        <fullName evidence="7">3',3'-cUAMP receptor CapE</fullName>
    </alternativeName>
    <alternativeName>
        <fullName evidence="3">Patatin-like phospholipase</fullName>
    </alternativeName>
</protein>